<proteinExistence type="evidence at protein level"/>
<protein>
    <recommendedName>
        <fullName evidence="8">Nucleoporin seh1</fullName>
    </recommendedName>
    <alternativeName>
        <fullName evidence="9">GATOR complex protein seh1</fullName>
    </alternativeName>
    <alternativeName>
        <fullName evidence="12">Nucleoporin complex protein 44A</fullName>
    </alternativeName>
</protein>
<keyword id="KW-0131">Cell cycle</keyword>
<keyword id="KW-0132">Cell division</keyword>
<keyword id="KW-0221">Differentiation</keyword>
<keyword id="KW-0458">Lysosome</keyword>
<keyword id="KW-0469">Meiosis</keyword>
<keyword id="KW-0498">Mitosis</keyword>
<keyword id="KW-0539">Nucleus</keyword>
<keyword id="KW-0896">Oogenesis</keyword>
<keyword id="KW-0653">Protein transport</keyword>
<keyword id="KW-1185">Reference proteome</keyword>
<keyword id="KW-0677">Repeat</keyword>
<keyword id="KW-0813">Transport</keyword>
<keyword id="KW-0853">WD repeat</keyword>
<dbReference type="EMBL" id="AE013599">
    <property type="protein sequence ID" value="AAF59154.1"/>
    <property type="molecule type" value="Genomic_DNA"/>
</dbReference>
<dbReference type="EMBL" id="AY060480">
    <property type="protein sequence ID" value="AAL25519.1"/>
    <property type="molecule type" value="mRNA"/>
</dbReference>
<dbReference type="EMBL" id="AE013599">
    <property type="protein sequence ID" value="AAM68880.1"/>
    <property type="molecule type" value="Genomic_DNA"/>
</dbReference>
<dbReference type="EMBL" id="AE013599">
    <property type="protein sequence ID" value="AAM68881.1"/>
    <property type="molecule type" value="Genomic_DNA"/>
</dbReference>
<dbReference type="RefSeq" id="NP_610343.1">
    <property type="nucleotide sequence ID" value="NM_136499.3"/>
</dbReference>
<dbReference type="RefSeq" id="NP_724637.1">
    <property type="nucleotide sequence ID" value="NM_165582.2"/>
</dbReference>
<dbReference type="RefSeq" id="NP_724638.1">
    <property type="nucleotide sequence ID" value="NM_165583.2"/>
</dbReference>
<dbReference type="SMR" id="Q7K2X8"/>
<dbReference type="ComplexPortal" id="CPX-2568">
    <property type="entry name" value="Nuclear pore complex"/>
</dbReference>
<dbReference type="ComplexPortal" id="CPX-2664">
    <property type="entry name" value="GATOR2 complex"/>
</dbReference>
<dbReference type="FunCoup" id="Q7K2X8">
    <property type="interactions" value="2220"/>
</dbReference>
<dbReference type="IntAct" id="Q7K2X8">
    <property type="interactions" value="15"/>
</dbReference>
<dbReference type="STRING" id="7227.FBpp0087937"/>
<dbReference type="GlyGen" id="Q7K2X8">
    <property type="glycosylation" value="1 site"/>
</dbReference>
<dbReference type="PaxDb" id="7227-FBpp0087936"/>
<dbReference type="DNASU" id="35762"/>
<dbReference type="EnsemblMetazoa" id="FBtr0088860">
    <property type="protein sequence ID" value="FBpp0087936"/>
    <property type="gene ID" value="FBgn0033247"/>
</dbReference>
<dbReference type="EnsemblMetazoa" id="FBtr0088861">
    <property type="protein sequence ID" value="FBpp0087937"/>
    <property type="gene ID" value="FBgn0033247"/>
</dbReference>
<dbReference type="EnsemblMetazoa" id="FBtr0088862">
    <property type="protein sequence ID" value="FBpp0087938"/>
    <property type="gene ID" value="FBgn0033247"/>
</dbReference>
<dbReference type="GeneID" id="35762"/>
<dbReference type="KEGG" id="dme:Dmel_CG8722"/>
<dbReference type="UCSC" id="CG8722-RA">
    <property type="organism name" value="d. melanogaster"/>
</dbReference>
<dbReference type="AGR" id="FB:FBgn0033247"/>
<dbReference type="CTD" id="35762"/>
<dbReference type="FlyBase" id="FBgn0033247">
    <property type="gene designation" value="Nup44A"/>
</dbReference>
<dbReference type="VEuPathDB" id="VectorBase:FBgn0033247"/>
<dbReference type="eggNOG" id="KOG2445">
    <property type="taxonomic scope" value="Eukaryota"/>
</dbReference>
<dbReference type="GeneTree" id="ENSGT00940000153393"/>
<dbReference type="HOGENOM" id="CLU_032441_1_1_1"/>
<dbReference type="InParanoid" id="Q7K2X8"/>
<dbReference type="OMA" id="NAPTRRW"/>
<dbReference type="OrthoDB" id="364224at2759"/>
<dbReference type="PhylomeDB" id="Q7K2X8"/>
<dbReference type="Reactome" id="R-DME-159227">
    <property type="pathway name" value="Transport of the SLBP independent Mature mRNA"/>
</dbReference>
<dbReference type="Reactome" id="R-DME-159230">
    <property type="pathway name" value="Transport of the SLBP Dependant Mature mRNA"/>
</dbReference>
<dbReference type="Reactome" id="R-DME-159231">
    <property type="pathway name" value="Transport of Mature mRNA Derived from an Intronless Transcript"/>
</dbReference>
<dbReference type="Reactome" id="R-DME-159236">
    <property type="pathway name" value="Transport of Mature mRNA derived from an Intron-Containing Transcript"/>
</dbReference>
<dbReference type="Reactome" id="R-DME-3108214">
    <property type="pathway name" value="SUMOylation of DNA damage response and repair proteins"/>
</dbReference>
<dbReference type="Reactome" id="R-DME-3301854">
    <property type="pathway name" value="Nuclear Pore Complex (NPC) Disassembly"/>
</dbReference>
<dbReference type="Reactome" id="R-DME-4085377">
    <property type="pathway name" value="SUMOylation of SUMOylation proteins"/>
</dbReference>
<dbReference type="Reactome" id="R-DME-4551638">
    <property type="pathway name" value="SUMOylation of chromatin organization proteins"/>
</dbReference>
<dbReference type="Reactome" id="R-DME-4615885">
    <property type="pathway name" value="SUMOylation of DNA replication proteins"/>
</dbReference>
<dbReference type="Reactome" id="R-DME-5578749">
    <property type="pathway name" value="Transcriptional regulation by small RNAs"/>
</dbReference>
<dbReference type="Reactome" id="R-DME-9615933">
    <property type="pathway name" value="Postmitotic nuclear pore complex (NPC) reformation"/>
</dbReference>
<dbReference type="BioGRID-ORCS" id="35762">
    <property type="hits" value="0 hits in 1 CRISPR screen"/>
</dbReference>
<dbReference type="GenomeRNAi" id="35762"/>
<dbReference type="PRO" id="PR:Q7K2X8"/>
<dbReference type="Proteomes" id="UP000000803">
    <property type="component" value="Chromosome 2R"/>
</dbReference>
<dbReference type="Bgee" id="FBgn0033247">
    <property type="expression patterns" value="Expressed in eye disc (Drosophila) and 98 other cell types or tissues"/>
</dbReference>
<dbReference type="GO" id="GO:0044754">
    <property type="term" value="C:autolysosome"/>
    <property type="evidence" value="ECO:0000314"/>
    <property type="project" value="FlyBase"/>
</dbReference>
<dbReference type="GO" id="GO:0061700">
    <property type="term" value="C:GATOR2 complex"/>
    <property type="evidence" value="ECO:0000314"/>
    <property type="project" value="UniProtKB"/>
</dbReference>
<dbReference type="GO" id="GO:0005764">
    <property type="term" value="C:lysosome"/>
    <property type="evidence" value="ECO:0000314"/>
    <property type="project" value="FlyBase"/>
</dbReference>
<dbReference type="GO" id="GO:0005635">
    <property type="term" value="C:nuclear envelope"/>
    <property type="evidence" value="ECO:0000314"/>
    <property type="project" value="FlyBase"/>
</dbReference>
<dbReference type="GO" id="GO:0031080">
    <property type="term" value="C:nuclear pore outer ring"/>
    <property type="evidence" value="ECO:0000318"/>
    <property type="project" value="GO_Central"/>
</dbReference>
<dbReference type="GO" id="GO:0032991">
    <property type="term" value="C:protein-containing complex"/>
    <property type="evidence" value="ECO:0000353"/>
    <property type="project" value="FlyBase"/>
</dbReference>
<dbReference type="GO" id="GO:0035859">
    <property type="term" value="C:Seh1-associated complex"/>
    <property type="evidence" value="ECO:0000314"/>
    <property type="project" value="FlyBase"/>
</dbReference>
<dbReference type="GO" id="GO:0005198">
    <property type="term" value="F:structural molecule activity"/>
    <property type="evidence" value="ECO:0007669"/>
    <property type="project" value="InterPro"/>
</dbReference>
<dbReference type="GO" id="GO:0051301">
    <property type="term" value="P:cell division"/>
    <property type="evidence" value="ECO:0007669"/>
    <property type="project" value="UniProtKB-KW"/>
</dbReference>
<dbReference type="GO" id="GO:0034198">
    <property type="term" value="P:cellular response to amino acid starvation"/>
    <property type="evidence" value="ECO:0000315"/>
    <property type="project" value="UniProtKB"/>
</dbReference>
<dbReference type="GO" id="GO:0007293">
    <property type="term" value="P:germarium-derived egg chamber formation"/>
    <property type="evidence" value="ECO:0000315"/>
    <property type="project" value="FlyBase"/>
</dbReference>
<dbReference type="GO" id="GO:0051321">
    <property type="term" value="P:meiotic cell cycle"/>
    <property type="evidence" value="ECO:0007669"/>
    <property type="project" value="UniProtKB-KW"/>
</dbReference>
<dbReference type="GO" id="GO:0010507">
    <property type="term" value="P:negative regulation of autophagy"/>
    <property type="evidence" value="ECO:0000315"/>
    <property type="project" value="FlyBase"/>
</dbReference>
<dbReference type="GO" id="GO:0048477">
    <property type="term" value="P:oogenesis"/>
    <property type="evidence" value="ECO:0000315"/>
    <property type="project" value="FlyBase"/>
</dbReference>
<dbReference type="GO" id="GO:0010508">
    <property type="term" value="P:positive regulation of autophagy"/>
    <property type="evidence" value="ECO:0000315"/>
    <property type="project" value="UniProtKB"/>
</dbReference>
<dbReference type="GO" id="GO:0045793">
    <property type="term" value="P:positive regulation of cell size"/>
    <property type="evidence" value="ECO:0000315"/>
    <property type="project" value="UniProtKB"/>
</dbReference>
<dbReference type="GO" id="GO:0032008">
    <property type="term" value="P:positive regulation of TOR signaling"/>
    <property type="evidence" value="ECO:0000315"/>
    <property type="project" value="UniProtKB"/>
</dbReference>
<dbReference type="GO" id="GO:1904263">
    <property type="term" value="P:positive regulation of TORC1 signaling"/>
    <property type="evidence" value="ECO:0000315"/>
    <property type="project" value="FlyBase"/>
</dbReference>
<dbReference type="GO" id="GO:0015031">
    <property type="term" value="P:protein transport"/>
    <property type="evidence" value="ECO:0007669"/>
    <property type="project" value="UniProtKB-KW"/>
</dbReference>
<dbReference type="GO" id="GO:0051445">
    <property type="term" value="P:regulation of meiotic cell cycle"/>
    <property type="evidence" value="ECO:0000315"/>
    <property type="project" value="FlyBase"/>
</dbReference>
<dbReference type="GO" id="GO:0007346">
    <property type="term" value="P:regulation of mitotic cell cycle"/>
    <property type="evidence" value="ECO:0000315"/>
    <property type="project" value="FlyBase"/>
</dbReference>
<dbReference type="FunFam" id="2.130.10.10:FF:000063">
    <property type="entry name" value="SEH1 like nucleoporin"/>
    <property type="match status" value="1"/>
</dbReference>
<dbReference type="Gene3D" id="2.130.10.10">
    <property type="entry name" value="YVTN repeat-like/Quinoprotein amine dehydrogenase"/>
    <property type="match status" value="1"/>
</dbReference>
<dbReference type="InterPro" id="IPR020472">
    <property type="entry name" value="G-protein_beta_WD-40_rep"/>
</dbReference>
<dbReference type="InterPro" id="IPR037363">
    <property type="entry name" value="Sec13/Seh1_fam"/>
</dbReference>
<dbReference type="InterPro" id="IPR015943">
    <property type="entry name" value="WD40/YVTN_repeat-like_dom_sf"/>
</dbReference>
<dbReference type="InterPro" id="IPR036322">
    <property type="entry name" value="WD40_repeat_dom_sf"/>
</dbReference>
<dbReference type="InterPro" id="IPR001680">
    <property type="entry name" value="WD40_rpt"/>
</dbReference>
<dbReference type="PANTHER" id="PTHR11024">
    <property type="entry name" value="NUCLEAR PORE COMPLEX PROTEIN SEC13 / SEH1 FAMILY MEMBER"/>
    <property type="match status" value="1"/>
</dbReference>
<dbReference type="PANTHER" id="PTHR11024:SF3">
    <property type="entry name" value="NUCLEOPORIN SEH1"/>
    <property type="match status" value="1"/>
</dbReference>
<dbReference type="Pfam" id="PF00400">
    <property type="entry name" value="WD40"/>
    <property type="match status" value="3"/>
</dbReference>
<dbReference type="PRINTS" id="PR00320">
    <property type="entry name" value="GPROTEINBRPT"/>
</dbReference>
<dbReference type="SMART" id="SM00320">
    <property type="entry name" value="WD40"/>
    <property type="match status" value="5"/>
</dbReference>
<dbReference type="SUPFAM" id="SSF50978">
    <property type="entry name" value="WD40 repeat-like"/>
    <property type="match status" value="1"/>
</dbReference>
<dbReference type="PROSITE" id="PS50082">
    <property type="entry name" value="WD_REPEATS_2"/>
    <property type="match status" value="2"/>
</dbReference>
<dbReference type="PROSITE" id="PS50294">
    <property type="entry name" value="WD_REPEATS_REGION"/>
    <property type="match status" value="2"/>
</dbReference>
<comment type="function">
    <text evidence="1 3">Probable component of the nuclear pore complex (NPC) (By similarity). Involved in maintaining the localization of another nucleoporin Mgtor to the nuclear envelope of early meiotic female germline cells (PubMed:21521741). It is not involved in recruiting the nucleoporins Mgtor, Nup107, Nup153 and FG-containing nucleoporins to the NPC (PubMed:21521741).</text>
</comment>
<comment type="function">
    <text evidence="3 4 5 6">An essential component of the GATOR subcomplex GATOR2 which functions as an activator of the amino acid-sensing branch of the mTORC1 signaling pathway (PubMed:23723238, PubMed:27166823). The two GATOR subcomplexes, GATOR1 and GATOR2, regulate the mTORC1 pathway in order to mediate metabolic homeostasis, female gametogenesis and the response to amino acid limitation and complete starvation (PubMed:23723238, PubMed:25512509, PubMed:27166823). GATOR2 activates the mTORC1 signaling pathway through the inhibition of the GATOR1 subcomplex, controlling the switch to cell proliferation growth under nutrient replete conditions and growth during female oocyte development (PubMed:21521741, PubMed:23723238, PubMed:25512509, PubMed:27166823). This component is required for activating mTORC1 specifically in germline cells to promote cell growth and maintain the oocyte fate, probably influences the organization and/or function of microtubules within ovarian cysts, and promotes accumulation of another GATOR2 complex member mio in germline and somatic tissues (PubMed:21521741, PubMed:23723238, PubMed:25512509, PubMed:27166823). GATOR1 and GATOR2 act at different stages of oogenesis to regulate mTORC1 in order to control meiotic entry and promote oocyte growth and development (PubMed:25512509). After exactly four mitotic cyst divisions, the GATOR1 complex members (Iml1, Nprl2 and Nprl3) down-regulate mTORC1 to slow cellular metabolism and promote the mitotic/meiotic transition (PubMed:25512509). At later stages of oogenesis, the mio and Nup44A components of the GATOR2 complex inhibit GATOR1 and thus activate mTORC1 to promote meiotic progression, and drive oocyte growth and development (PubMed:21521741, PubMed:25512509). In addition to its role in the regulation of the mTORC1 complex, functions independently of mTORC1 to prevent the inappropriate accumulation of autolysosomes in germline tissues (PubMed:27166823).</text>
</comment>
<comment type="subunit">
    <text evidence="1 3 6 7">Probable component of the nuclear pore complex (NPC) (By similarity). Component of the GATOR complex consisting of mio, Nup44A/Seh1, Im11, Nplr3, Nplr2, Wdr24, Wdr59 and Sec13 (PubMed:27166823). Within the GATOR complex, probable component of the GATOR2 subcomplex which is likely composed of mio, Nup44A/Seh1, Wdr24, Wdr59 and Sec13 (PubMed:27166823). Interacts with mio (PubMed:21521741). Interacts with Wdr24 (PubMed:27166823). The GATOR2 complex associates with unmet in the absence of S-adenosyl-L-methionine; the mio-Wdr24-Nup44A subcomplex is essential and sufficient for this interaction while Wdr59 and Sec13 are dispensable (PubMed:38514639). This association acts as a nutrient sensor to inhibit mTORC1 signaling in the absence of methionine (PubMed:38514639).</text>
</comment>
<comment type="interaction">
    <interactant intactId="EBI-118041">
        <id>Q7K2X8</id>
    </interactant>
    <interactant intactId="EBI-3407214">
        <id>Q9XZ25</id>
        <label>Wdr24</label>
    </interactant>
    <organismsDiffer>false</organismsDiffer>
    <experiments>2</experiments>
</comment>
<comment type="subcellular location">
    <subcellularLocation>
        <location evidence="3">Nucleus envelope</location>
    </subcellularLocation>
    <subcellularLocation>
        <location evidence="5">Lysosome</location>
    </subcellularLocation>
    <text evidence="3 5">Enriched on the nuclear envelope of nurse cells, oocytes and syncytial embryos (PubMed:21521741). In egg chambers detected in lysosomes and autolysosomes of both fed and starved females (PubMed:25512509).</text>
</comment>
<comment type="tissue specificity">
    <text evidence="3">Expressed in ovarian cysts.</text>
</comment>
<comment type="disruption phenotype">
    <text evidence="3 5 6">Adults develop normally, however females display ovarian defects and reduced fertility likely due to the significant decrease in mTORC1 activity within the germline cells (PubMed:21521741, PubMed:25512509). Ovarian defects include adherent cyst divisions due to mitotic delay, accumulation of autolysosomes resulting in reduced number of egg chambers and reduced number of eggs laid per female per day (PubMed:21521741, PubMed:25512509). Spindle defects and mitotic delay results in egg chambers often containing 16 polyploid nurse cells and no oocyte because the oocyte enters the endocycle and develops as a polyploid nurse cell (PubMed:21521741). In early meiotic germline cells, the nucleoporin Mgtor is displaced from the nuclear envelope to the nucleoplasm, most notably as cysts enter the meiotic cycle beginning in R2a of the germarium (PubMed:21521741). However, there is no effect on the recruitment of Mgtor or other nucleoporins (Nup107, Nup153 and FG-containing nucleoporins) to the nuclear pore complex (PubMed:21521741). In contrast, somatic tissues do not display any obvious developmental defects; there is no decrease in mTORC1 activity and no accumulation of autolysosomes in the larval fat body (PubMed:21521741, PubMed:25512509, PubMed:27166823). Increasing mTORC1 activity in the mutant female germline via RNAi-mediated knockdown of the GATOR1 subcomplex members Nprl2, Nprl3, Iml1 or knockdown of Tsc1 rescues the ovarian defects (PubMed:25512509). However, knockdown of Nprl2 or Nprl3 does not rescue the accumulation of autolysosomes (PubMed:27166823).</text>
</comment>
<comment type="similarity">
    <text evidence="10">Belongs to the WD repeat SEC13 family.</text>
</comment>
<evidence type="ECO:0000250" key="1">
    <source>
        <dbReference type="UniProtKB" id="Q96EE3"/>
    </source>
</evidence>
<evidence type="ECO:0000255" key="2"/>
<evidence type="ECO:0000269" key="3">
    <source>
    </source>
</evidence>
<evidence type="ECO:0000269" key="4">
    <source>
    </source>
</evidence>
<evidence type="ECO:0000269" key="5">
    <source>
    </source>
</evidence>
<evidence type="ECO:0000269" key="6">
    <source>
    </source>
</evidence>
<evidence type="ECO:0000269" key="7">
    <source>
    </source>
</evidence>
<evidence type="ECO:0000303" key="8">
    <source>
    </source>
</evidence>
<evidence type="ECO:0000303" key="9">
    <source>
    </source>
</evidence>
<evidence type="ECO:0000305" key="10"/>
<evidence type="ECO:0000312" key="11">
    <source>
        <dbReference type="EMBL" id="AAL25519.1"/>
    </source>
</evidence>
<evidence type="ECO:0000312" key="12">
    <source>
        <dbReference type="FlyBase" id="FBgn0033247"/>
    </source>
</evidence>
<evidence type="ECO:0000312" key="13">
    <source>
        <dbReference type="Proteomes" id="UP000000803"/>
    </source>
</evidence>
<sequence length="354" mass="39515">MFDVEPIIADHKDVIHDVVFDYYGRRMATCSSDQTVKIWDEDGQGKWNVTSSWKAHSGSIWRVSWAHPEFGQVVATCSFDRTASVWEEVIGEKVSSTNTPTRRWVRRTTLVDSRTSVTDVEFAPKYLGLLLATASADGIIRIYEAPDIMNLSQWPVQHEISNKLPLSCLSWNTSTYMVTQLLAAGSDEAATPTGKVFLFAYSENSRKCVKIDTVNDITDPVTDVAFAPNAGRTFHMLAVASKDLYIVNLRGVTDATDISKLDIQTIKFSEHNCPVWRVCWNMLATMLISTGDDGCVRLWRMNYNRQWRCAAVLKAEGSGPTYEPAPPTPTLATTASATAKFYKKGTIGNQVPWH</sequence>
<gene>
    <name evidence="12" type="primary">Nup44A</name>
    <name evidence="8" type="synonym">seh1</name>
    <name evidence="12" type="ORF">CG8722</name>
</gene>
<name>SEH1_DROME</name>
<accession>Q7K2X8</accession>
<reference evidence="13" key="1">
    <citation type="journal article" date="2000" name="Science">
        <title>The genome sequence of Drosophila melanogaster.</title>
        <authorList>
            <person name="Adams M.D."/>
            <person name="Celniker S.E."/>
            <person name="Holt R.A."/>
            <person name="Evans C.A."/>
            <person name="Gocayne J.D."/>
            <person name="Amanatides P.G."/>
            <person name="Scherer S.E."/>
            <person name="Li P.W."/>
            <person name="Hoskins R.A."/>
            <person name="Galle R.F."/>
            <person name="George R.A."/>
            <person name="Lewis S.E."/>
            <person name="Richards S."/>
            <person name="Ashburner M."/>
            <person name="Henderson S.N."/>
            <person name="Sutton G.G."/>
            <person name="Wortman J.R."/>
            <person name="Yandell M.D."/>
            <person name="Zhang Q."/>
            <person name="Chen L.X."/>
            <person name="Brandon R.C."/>
            <person name="Rogers Y.-H.C."/>
            <person name="Blazej R.G."/>
            <person name="Champe M."/>
            <person name="Pfeiffer B.D."/>
            <person name="Wan K.H."/>
            <person name="Doyle C."/>
            <person name="Baxter E.G."/>
            <person name="Helt G."/>
            <person name="Nelson C.R."/>
            <person name="Miklos G.L.G."/>
            <person name="Abril J.F."/>
            <person name="Agbayani A."/>
            <person name="An H.-J."/>
            <person name="Andrews-Pfannkoch C."/>
            <person name="Baldwin D."/>
            <person name="Ballew R.M."/>
            <person name="Basu A."/>
            <person name="Baxendale J."/>
            <person name="Bayraktaroglu L."/>
            <person name="Beasley E.M."/>
            <person name="Beeson K.Y."/>
            <person name="Benos P.V."/>
            <person name="Berman B.P."/>
            <person name="Bhandari D."/>
            <person name="Bolshakov S."/>
            <person name="Borkova D."/>
            <person name="Botchan M.R."/>
            <person name="Bouck J."/>
            <person name="Brokstein P."/>
            <person name="Brottier P."/>
            <person name="Burtis K.C."/>
            <person name="Busam D.A."/>
            <person name="Butler H."/>
            <person name="Cadieu E."/>
            <person name="Center A."/>
            <person name="Chandra I."/>
            <person name="Cherry J.M."/>
            <person name="Cawley S."/>
            <person name="Dahlke C."/>
            <person name="Davenport L.B."/>
            <person name="Davies P."/>
            <person name="de Pablos B."/>
            <person name="Delcher A."/>
            <person name="Deng Z."/>
            <person name="Mays A.D."/>
            <person name="Dew I."/>
            <person name="Dietz S.M."/>
            <person name="Dodson K."/>
            <person name="Doup L.E."/>
            <person name="Downes M."/>
            <person name="Dugan-Rocha S."/>
            <person name="Dunkov B.C."/>
            <person name="Dunn P."/>
            <person name="Durbin K.J."/>
            <person name="Evangelista C.C."/>
            <person name="Ferraz C."/>
            <person name="Ferriera S."/>
            <person name="Fleischmann W."/>
            <person name="Fosler C."/>
            <person name="Gabrielian A.E."/>
            <person name="Garg N.S."/>
            <person name="Gelbart W.M."/>
            <person name="Glasser K."/>
            <person name="Glodek A."/>
            <person name="Gong F."/>
            <person name="Gorrell J.H."/>
            <person name="Gu Z."/>
            <person name="Guan P."/>
            <person name="Harris M."/>
            <person name="Harris N.L."/>
            <person name="Harvey D.A."/>
            <person name="Heiman T.J."/>
            <person name="Hernandez J.R."/>
            <person name="Houck J."/>
            <person name="Hostin D."/>
            <person name="Houston K.A."/>
            <person name="Howland T.J."/>
            <person name="Wei M.-H."/>
            <person name="Ibegwam C."/>
            <person name="Jalali M."/>
            <person name="Kalush F."/>
            <person name="Karpen G.H."/>
            <person name="Ke Z."/>
            <person name="Kennison J.A."/>
            <person name="Ketchum K.A."/>
            <person name="Kimmel B.E."/>
            <person name="Kodira C.D."/>
            <person name="Kraft C.L."/>
            <person name="Kravitz S."/>
            <person name="Kulp D."/>
            <person name="Lai Z."/>
            <person name="Lasko P."/>
            <person name="Lei Y."/>
            <person name="Levitsky A.A."/>
            <person name="Li J.H."/>
            <person name="Li Z."/>
            <person name="Liang Y."/>
            <person name="Lin X."/>
            <person name="Liu X."/>
            <person name="Mattei B."/>
            <person name="McIntosh T.C."/>
            <person name="McLeod M.P."/>
            <person name="McPherson D."/>
            <person name="Merkulov G."/>
            <person name="Milshina N.V."/>
            <person name="Mobarry C."/>
            <person name="Morris J."/>
            <person name="Moshrefi A."/>
            <person name="Mount S.M."/>
            <person name="Moy M."/>
            <person name="Murphy B."/>
            <person name="Murphy L."/>
            <person name="Muzny D.M."/>
            <person name="Nelson D.L."/>
            <person name="Nelson D.R."/>
            <person name="Nelson K.A."/>
            <person name="Nixon K."/>
            <person name="Nusskern D.R."/>
            <person name="Pacleb J.M."/>
            <person name="Palazzolo M."/>
            <person name="Pittman G.S."/>
            <person name="Pan S."/>
            <person name="Pollard J."/>
            <person name="Puri V."/>
            <person name="Reese M.G."/>
            <person name="Reinert K."/>
            <person name="Remington K."/>
            <person name="Saunders R.D.C."/>
            <person name="Scheeler F."/>
            <person name="Shen H."/>
            <person name="Shue B.C."/>
            <person name="Siden-Kiamos I."/>
            <person name="Simpson M."/>
            <person name="Skupski M.P."/>
            <person name="Smith T.J."/>
            <person name="Spier E."/>
            <person name="Spradling A.C."/>
            <person name="Stapleton M."/>
            <person name="Strong R."/>
            <person name="Sun E."/>
            <person name="Svirskas R."/>
            <person name="Tector C."/>
            <person name="Turner R."/>
            <person name="Venter E."/>
            <person name="Wang A.H."/>
            <person name="Wang X."/>
            <person name="Wang Z.-Y."/>
            <person name="Wassarman D.A."/>
            <person name="Weinstock G.M."/>
            <person name="Weissenbach J."/>
            <person name="Williams S.M."/>
            <person name="Woodage T."/>
            <person name="Worley K.C."/>
            <person name="Wu D."/>
            <person name="Yang S."/>
            <person name="Yao Q.A."/>
            <person name="Ye J."/>
            <person name="Yeh R.-F."/>
            <person name="Zaveri J.S."/>
            <person name="Zhan M."/>
            <person name="Zhang G."/>
            <person name="Zhao Q."/>
            <person name="Zheng L."/>
            <person name="Zheng X.H."/>
            <person name="Zhong F.N."/>
            <person name="Zhong W."/>
            <person name="Zhou X."/>
            <person name="Zhu S.C."/>
            <person name="Zhu X."/>
            <person name="Smith H.O."/>
            <person name="Gibbs R.A."/>
            <person name="Myers E.W."/>
            <person name="Rubin G.M."/>
            <person name="Venter J.C."/>
        </authorList>
    </citation>
    <scope>NUCLEOTIDE SEQUENCE [LARGE SCALE GENOMIC DNA]</scope>
    <source>
        <strain evidence="13">Berkeley</strain>
    </source>
</reference>
<reference evidence="13" key="2">
    <citation type="journal article" date="2002" name="Genome Biol.">
        <title>Annotation of the Drosophila melanogaster euchromatic genome: a systematic review.</title>
        <authorList>
            <person name="Misra S."/>
            <person name="Crosby M.A."/>
            <person name="Mungall C.J."/>
            <person name="Matthews B.B."/>
            <person name="Campbell K.S."/>
            <person name="Hradecky P."/>
            <person name="Huang Y."/>
            <person name="Kaminker J.S."/>
            <person name="Millburn G.H."/>
            <person name="Prochnik S.E."/>
            <person name="Smith C.D."/>
            <person name="Tupy J.L."/>
            <person name="Whitfield E.J."/>
            <person name="Bayraktaroglu L."/>
            <person name="Berman B.P."/>
            <person name="Bettencourt B.R."/>
            <person name="Celniker S.E."/>
            <person name="de Grey A.D.N.J."/>
            <person name="Drysdale R.A."/>
            <person name="Harris N.L."/>
            <person name="Richter J."/>
            <person name="Russo S."/>
            <person name="Schroeder A.J."/>
            <person name="Shu S.Q."/>
            <person name="Stapleton M."/>
            <person name="Yamada C."/>
            <person name="Ashburner M."/>
            <person name="Gelbart W.M."/>
            <person name="Rubin G.M."/>
            <person name="Lewis S.E."/>
        </authorList>
    </citation>
    <scope>GENOME REANNOTATION</scope>
    <source>
        <strain evidence="13">Berkeley</strain>
    </source>
</reference>
<reference evidence="11" key="3">
    <citation type="journal article" date="2002" name="Genome Biol.">
        <title>A Drosophila full-length cDNA resource.</title>
        <authorList>
            <person name="Stapleton M."/>
            <person name="Carlson J.W."/>
            <person name="Brokstein P."/>
            <person name="Yu C."/>
            <person name="Champe M."/>
            <person name="George R.A."/>
            <person name="Guarin H."/>
            <person name="Kronmiller B."/>
            <person name="Pacleb J.M."/>
            <person name="Park S."/>
            <person name="Wan K.H."/>
            <person name="Rubin G.M."/>
            <person name="Celniker S.E."/>
        </authorList>
    </citation>
    <scope>NUCLEOTIDE SEQUENCE [LARGE SCALE MRNA]</scope>
    <source>
        <strain evidence="13">Berkeley</strain>
        <tissue evidence="13">Embryo</tissue>
    </source>
</reference>
<reference evidence="10" key="4">
    <citation type="journal article" date="2011" name="Development">
        <title>The nucleoporin Seh1 forms a complex with Mio and serves an essential tissue-specific function in Drosophila oogenesis.</title>
        <authorList>
            <person name="Senger S."/>
            <person name="Csokmay J."/>
            <person name="Akbar T."/>
            <person name="Tanveer A."/>
            <person name="Jones T.I."/>
            <person name="Sengupta P."/>
            <person name="Lilly M.A."/>
        </authorList>
    </citation>
    <scope>FUNCTION</scope>
    <scope>INTERACTION WITH MIO</scope>
    <scope>SUBCELLULAR LOCATION</scope>
    <scope>TISSUE SPECIFICITY</scope>
    <scope>DISRUPTION PHENOTYPE</scope>
</reference>
<reference key="5">
    <citation type="journal article" date="2011" name="Development">
        <authorList>
            <person name="Senger S."/>
            <person name="Csokmay J."/>
            <person name="Akbar T."/>
            <person name="Tanveer A."/>
            <person name="Jones T.I."/>
            <person name="Sengupta P."/>
            <person name="Lilly M.A."/>
        </authorList>
    </citation>
    <scope>ERRATUM OF PUBMED:21521741</scope>
</reference>
<reference evidence="10" key="6">
    <citation type="journal article" date="2013" name="Science">
        <title>A Tumor suppressor complex with GAP activity for the Rag GTPases that signal amino acid sufficiency to mTORC1.</title>
        <authorList>
            <person name="Bar-Peled L."/>
            <person name="Chantranupong L."/>
            <person name="Cherniack A.D."/>
            <person name="Chen W.W."/>
            <person name="Ottina K.A."/>
            <person name="Grabiner B.C."/>
            <person name="Spear E.D."/>
            <person name="Carter S.L."/>
            <person name="Meyerson M."/>
            <person name="Sabatini D.M."/>
        </authorList>
    </citation>
    <scope>FUNCTION</scope>
</reference>
<reference evidence="10" key="7">
    <citation type="journal article" date="2014" name="Proc. Natl. Acad. Sci. U.S.A.">
        <title>TORC1 regulators Iml1/GATOR1 and GATOR2 control meiotic entry and oocyte development in Drosophila.</title>
        <authorList>
            <person name="Wei Y."/>
            <person name="Reveal B."/>
            <person name="Reich J."/>
            <person name="Laursen W.J."/>
            <person name="Senger S."/>
            <person name="Akbar T."/>
            <person name="Iida-Jones T."/>
            <person name="Cai W."/>
            <person name="Jarnik M."/>
            <person name="Lilly M.A."/>
        </authorList>
    </citation>
    <scope>FUNCTION</scope>
    <scope>SUBCELLULAR LOCATION</scope>
    <scope>DISRUPTION PHENOTYPE</scope>
</reference>
<reference evidence="10" key="8">
    <citation type="journal article" date="2016" name="PLoS Genet.">
        <title>The GATOR2 component Wdr24 regulates TORC1 activity and lysosome function.</title>
        <authorList>
            <person name="Cai W."/>
            <person name="Wei Y."/>
            <person name="Jarnik M."/>
            <person name="Reich J."/>
            <person name="Lilly M.A."/>
        </authorList>
    </citation>
    <scope>FUNCTION</scope>
    <scope>IDENTIFICATION IN THE GATOR COMPLEX</scope>
    <scope>INTERACTION WITH WDR24</scope>
    <scope>DISRUPTION PHENOTYPE</scope>
</reference>
<reference key="9">
    <citation type="journal article" date="2024" name="Nat. Commun.">
        <title>An evolutionary mechanism to assimilate new nutrient sensors into the mTORC1 pathway.</title>
        <authorList>
            <person name="Liu G.Y."/>
            <person name="Jouandin P."/>
            <person name="Bahng R.E."/>
            <person name="Perrimon N."/>
            <person name="Sabatini D.M."/>
        </authorList>
    </citation>
    <scope>INTERACTION WITH UNMET</scope>
</reference>
<feature type="chain" id="PRO_0000447023" description="Nucleoporin seh1">
    <location>
        <begin position="1"/>
        <end position="354"/>
    </location>
</feature>
<feature type="repeat" description="WD 1" evidence="2">
    <location>
        <begin position="10"/>
        <end position="49"/>
    </location>
</feature>
<feature type="repeat" description="WD 2" evidence="2">
    <location>
        <begin position="55"/>
        <end position="96"/>
    </location>
</feature>
<feature type="repeat" description="WD 3" evidence="2">
    <location>
        <begin position="112"/>
        <end position="153"/>
    </location>
</feature>
<feature type="repeat" description="WD 4" evidence="2">
    <location>
        <begin position="161"/>
        <end position="209"/>
    </location>
</feature>
<feature type="repeat" description="WD 5" evidence="2">
    <location>
        <begin position="216"/>
        <end position="259"/>
    </location>
</feature>
<feature type="repeat" description="WD 6" evidence="2">
    <location>
        <begin position="270"/>
        <end position="309"/>
    </location>
</feature>
<organism evidence="13">
    <name type="scientific">Drosophila melanogaster</name>
    <name type="common">Fruit fly</name>
    <dbReference type="NCBI Taxonomy" id="7227"/>
    <lineage>
        <taxon>Eukaryota</taxon>
        <taxon>Metazoa</taxon>
        <taxon>Ecdysozoa</taxon>
        <taxon>Arthropoda</taxon>
        <taxon>Hexapoda</taxon>
        <taxon>Insecta</taxon>
        <taxon>Pterygota</taxon>
        <taxon>Neoptera</taxon>
        <taxon>Endopterygota</taxon>
        <taxon>Diptera</taxon>
        <taxon>Brachycera</taxon>
        <taxon>Muscomorpha</taxon>
        <taxon>Ephydroidea</taxon>
        <taxon>Drosophilidae</taxon>
        <taxon>Drosophila</taxon>
        <taxon>Sophophora</taxon>
    </lineage>
</organism>